<evidence type="ECO:0000250" key="1"/>
<evidence type="ECO:0000305" key="2"/>
<feature type="chain" id="PRO_0000085538" description="FMN reductase (NADH) RutF">
    <location>
        <begin position="1"/>
        <end position="164"/>
    </location>
</feature>
<keyword id="KW-0285">Flavoprotein</keyword>
<keyword id="KW-0288">FMN</keyword>
<keyword id="KW-0520">NAD</keyword>
<keyword id="KW-0560">Oxidoreductase</keyword>
<keyword id="KW-1185">Reference proteome</keyword>
<protein>
    <recommendedName>
        <fullName>FMN reductase (NADH) RutF</fullName>
        <ecNumber>1.5.1.42</ecNumber>
    </recommendedName>
    <alternativeName>
        <fullName>FMN reductase</fullName>
    </alternativeName>
    <alternativeName>
        <fullName>NADH-flavin reductase RutF</fullName>
    </alternativeName>
    <alternativeName>
        <fullName>NADH:flavin oxidoreductase</fullName>
    </alternativeName>
</protein>
<name>RUTF_ECO57</name>
<accession>Q8XAV0</accession>
<sequence length="164" mass="17760">MNIVDQQTFRDAMSCMGAAVNIITTDGPAGRAGFTASAVCSVTDTPPTLLVCLNRGASVWPVFNENRTLCVNTLSAGQEPLSNLFGGKTPMEHRFAAARWQNGVTGCPQLEEALVSFDCRISQVVSVGTHDILFCAIEAIHRHATPYGLVWFDRSYHALMRPAC</sequence>
<gene>
    <name type="primary">rutF</name>
    <name type="ordered locus">Z1506</name>
    <name type="ordered locus">ECs1253</name>
</gene>
<proteinExistence type="inferred from homology"/>
<comment type="function">
    <text evidence="1">Catalyzes the reduction of FMN to FMNH2 which is used to reduce pyrimidine by RutA via the Rut pathway.</text>
</comment>
<comment type="catalytic activity">
    <reaction>
        <text>FMNH2 + NAD(+) = FMN + NADH + 2 H(+)</text>
        <dbReference type="Rhea" id="RHEA:21620"/>
        <dbReference type="ChEBI" id="CHEBI:15378"/>
        <dbReference type="ChEBI" id="CHEBI:57540"/>
        <dbReference type="ChEBI" id="CHEBI:57618"/>
        <dbReference type="ChEBI" id="CHEBI:57945"/>
        <dbReference type="ChEBI" id="CHEBI:58210"/>
        <dbReference type="EC" id="1.5.1.42"/>
    </reaction>
</comment>
<comment type="induction">
    <text evidence="2">Up-regulated by the nitrogen regulatory protein C (NtrC also called GlnG) and repressed by RutR.</text>
</comment>
<comment type="similarity">
    <text evidence="2">Belongs to the non-flavoprotein flavin reductase family. RutF subfamily.</text>
</comment>
<comment type="sequence caution" evidence="2">
    <conflict type="erroneous initiation">
        <sequence resource="EMBL-CDS" id="AAG55623"/>
    </conflict>
    <text>Truncated N-terminus.</text>
</comment>
<reference key="1">
    <citation type="journal article" date="2001" name="Nature">
        <title>Genome sequence of enterohaemorrhagic Escherichia coli O157:H7.</title>
        <authorList>
            <person name="Perna N.T."/>
            <person name="Plunkett G. III"/>
            <person name="Burland V."/>
            <person name="Mau B."/>
            <person name="Glasner J.D."/>
            <person name="Rose D.J."/>
            <person name="Mayhew G.F."/>
            <person name="Evans P.S."/>
            <person name="Gregor J."/>
            <person name="Kirkpatrick H.A."/>
            <person name="Posfai G."/>
            <person name="Hackett J."/>
            <person name="Klink S."/>
            <person name="Boutin A."/>
            <person name="Shao Y."/>
            <person name="Miller L."/>
            <person name="Grotbeck E.J."/>
            <person name="Davis N.W."/>
            <person name="Lim A."/>
            <person name="Dimalanta E.T."/>
            <person name="Potamousis K."/>
            <person name="Apodaca J."/>
            <person name="Anantharaman T.S."/>
            <person name="Lin J."/>
            <person name="Yen G."/>
            <person name="Schwartz D.C."/>
            <person name="Welch R.A."/>
            <person name="Blattner F.R."/>
        </authorList>
    </citation>
    <scope>NUCLEOTIDE SEQUENCE [LARGE SCALE GENOMIC DNA]</scope>
    <source>
        <strain>O157:H7 / EDL933 / ATCC 700927 / EHEC</strain>
    </source>
</reference>
<reference key="2">
    <citation type="journal article" date="2001" name="DNA Res.">
        <title>Complete genome sequence of enterohemorrhagic Escherichia coli O157:H7 and genomic comparison with a laboratory strain K-12.</title>
        <authorList>
            <person name="Hayashi T."/>
            <person name="Makino K."/>
            <person name="Ohnishi M."/>
            <person name="Kurokawa K."/>
            <person name="Ishii K."/>
            <person name="Yokoyama K."/>
            <person name="Han C.-G."/>
            <person name="Ohtsubo E."/>
            <person name="Nakayama K."/>
            <person name="Murata T."/>
            <person name="Tanaka M."/>
            <person name="Tobe T."/>
            <person name="Iida T."/>
            <person name="Takami H."/>
            <person name="Honda T."/>
            <person name="Sasakawa C."/>
            <person name="Ogasawara N."/>
            <person name="Yasunaga T."/>
            <person name="Kuhara S."/>
            <person name="Shiba T."/>
            <person name="Hattori M."/>
            <person name="Shinagawa H."/>
        </authorList>
    </citation>
    <scope>NUCLEOTIDE SEQUENCE [LARGE SCALE GENOMIC DNA]</scope>
    <source>
        <strain>O157:H7 / Sakai / RIMD 0509952 / EHEC</strain>
    </source>
</reference>
<organism>
    <name type="scientific">Escherichia coli O157:H7</name>
    <dbReference type="NCBI Taxonomy" id="83334"/>
    <lineage>
        <taxon>Bacteria</taxon>
        <taxon>Pseudomonadati</taxon>
        <taxon>Pseudomonadota</taxon>
        <taxon>Gammaproteobacteria</taxon>
        <taxon>Enterobacterales</taxon>
        <taxon>Enterobacteriaceae</taxon>
        <taxon>Escherichia</taxon>
    </lineage>
</organism>
<dbReference type="EC" id="1.5.1.42"/>
<dbReference type="EMBL" id="AE005174">
    <property type="protein sequence ID" value="AAG55623.1"/>
    <property type="status" value="ALT_INIT"/>
    <property type="molecule type" value="Genomic_DNA"/>
</dbReference>
<dbReference type="EMBL" id="BA000007">
    <property type="protein sequence ID" value="BAB34676.2"/>
    <property type="molecule type" value="Genomic_DNA"/>
</dbReference>
<dbReference type="PIR" id="C85645">
    <property type="entry name" value="C85645"/>
</dbReference>
<dbReference type="PIR" id="E90785">
    <property type="entry name" value="E90785"/>
</dbReference>
<dbReference type="RefSeq" id="NP_309280.2">
    <property type="nucleotide sequence ID" value="NC_002695.1"/>
</dbReference>
<dbReference type="RefSeq" id="WP_001028088.1">
    <property type="nucleotide sequence ID" value="NZ_VOAI01000026.1"/>
</dbReference>
<dbReference type="SMR" id="Q8XAV0"/>
<dbReference type="STRING" id="155864.Z1506"/>
<dbReference type="GeneID" id="912887"/>
<dbReference type="KEGG" id="ece:Z1506"/>
<dbReference type="KEGG" id="ecs:ECs_1253"/>
<dbReference type="PATRIC" id="fig|386585.9.peg.1356"/>
<dbReference type="eggNOG" id="COG1853">
    <property type="taxonomic scope" value="Bacteria"/>
</dbReference>
<dbReference type="HOGENOM" id="CLU_059021_2_2_6"/>
<dbReference type="OMA" id="QFCTGVT"/>
<dbReference type="Proteomes" id="UP000000558">
    <property type="component" value="Chromosome"/>
</dbReference>
<dbReference type="Proteomes" id="UP000002519">
    <property type="component" value="Chromosome"/>
</dbReference>
<dbReference type="GO" id="GO:0010181">
    <property type="term" value="F:FMN binding"/>
    <property type="evidence" value="ECO:0007669"/>
    <property type="project" value="InterPro"/>
</dbReference>
<dbReference type="GO" id="GO:0052874">
    <property type="term" value="F:FMN reductase (NADH) activity"/>
    <property type="evidence" value="ECO:0007669"/>
    <property type="project" value="UniProtKB-EC"/>
</dbReference>
<dbReference type="GO" id="GO:0008752">
    <property type="term" value="F:FMN reductase [NAD(P)H] activity"/>
    <property type="evidence" value="ECO:0007669"/>
    <property type="project" value="InterPro"/>
</dbReference>
<dbReference type="GO" id="GO:0042602">
    <property type="term" value="F:riboflavin reductase (NADPH) activity"/>
    <property type="evidence" value="ECO:0007669"/>
    <property type="project" value="UniProtKB-UniRule"/>
</dbReference>
<dbReference type="GO" id="GO:0019740">
    <property type="term" value="P:nitrogen utilization"/>
    <property type="evidence" value="ECO:0007669"/>
    <property type="project" value="UniProtKB-UniRule"/>
</dbReference>
<dbReference type="GO" id="GO:0006212">
    <property type="term" value="P:uracil catabolic process"/>
    <property type="evidence" value="ECO:0007669"/>
    <property type="project" value="UniProtKB-UniRule"/>
</dbReference>
<dbReference type="FunFam" id="2.30.110.10:FF:000002">
    <property type="entry name" value="FMN reductase (NADH) RutF"/>
    <property type="match status" value="1"/>
</dbReference>
<dbReference type="Gene3D" id="2.30.110.10">
    <property type="entry name" value="Electron Transport, Fmn-binding Protein, Chain A"/>
    <property type="match status" value="1"/>
</dbReference>
<dbReference type="HAMAP" id="MF_00833">
    <property type="entry name" value="RutF"/>
    <property type="match status" value="1"/>
</dbReference>
<dbReference type="InterPro" id="IPR002563">
    <property type="entry name" value="Flavin_Rdtase-like_dom"/>
</dbReference>
<dbReference type="InterPro" id="IPR050268">
    <property type="entry name" value="NADH-dep_flavin_reductase"/>
</dbReference>
<dbReference type="InterPro" id="IPR019917">
    <property type="entry name" value="RutF"/>
</dbReference>
<dbReference type="InterPro" id="IPR012349">
    <property type="entry name" value="Split_barrel_FMN-bd"/>
</dbReference>
<dbReference type="NCBIfam" id="TIGR03615">
    <property type="entry name" value="RutF"/>
    <property type="match status" value="1"/>
</dbReference>
<dbReference type="PANTHER" id="PTHR30466">
    <property type="entry name" value="FLAVIN REDUCTASE"/>
    <property type="match status" value="1"/>
</dbReference>
<dbReference type="PANTHER" id="PTHR30466:SF1">
    <property type="entry name" value="FMN REDUCTASE (NADH) RUTF"/>
    <property type="match status" value="1"/>
</dbReference>
<dbReference type="Pfam" id="PF01613">
    <property type="entry name" value="Flavin_Reduct"/>
    <property type="match status" value="1"/>
</dbReference>
<dbReference type="SMART" id="SM00903">
    <property type="entry name" value="Flavin_Reduct"/>
    <property type="match status" value="1"/>
</dbReference>
<dbReference type="SUPFAM" id="SSF50475">
    <property type="entry name" value="FMN-binding split barrel"/>
    <property type="match status" value="1"/>
</dbReference>